<evidence type="ECO:0000255" key="1">
    <source>
        <dbReference type="HAMAP-Rule" id="MF_01202"/>
    </source>
</evidence>
<reference key="1">
    <citation type="submission" date="2007-10" db="EMBL/GenBank/DDBJ databases">
        <title>Complete sequence of chromosome 1 of Burkholderia multivorans ATCC 17616.</title>
        <authorList>
            <person name="Copeland A."/>
            <person name="Lucas S."/>
            <person name="Lapidus A."/>
            <person name="Barry K."/>
            <person name="Glavina del Rio T."/>
            <person name="Dalin E."/>
            <person name="Tice H."/>
            <person name="Pitluck S."/>
            <person name="Chain P."/>
            <person name="Malfatti S."/>
            <person name="Shin M."/>
            <person name="Vergez L."/>
            <person name="Schmutz J."/>
            <person name="Larimer F."/>
            <person name="Land M."/>
            <person name="Hauser L."/>
            <person name="Kyrpides N."/>
            <person name="Kim E."/>
            <person name="Tiedje J."/>
            <person name="Richardson P."/>
        </authorList>
    </citation>
    <scope>NUCLEOTIDE SEQUENCE [LARGE SCALE GENOMIC DNA]</scope>
    <source>
        <strain>ATCC 17616 / 249</strain>
    </source>
</reference>
<reference key="2">
    <citation type="submission" date="2007-04" db="EMBL/GenBank/DDBJ databases">
        <title>Complete genome sequence of Burkholderia multivorans ATCC 17616.</title>
        <authorList>
            <person name="Ohtsubo Y."/>
            <person name="Yamashita A."/>
            <person name="Kurokawa K."/>
            <person name="Takami H."/>
            <person name="Yuhara S."/>
            <person name="Nishiyama E."/>
            <person name="Endo R."/>
            <person name="Miyazaki R."/>
            <person name="Ono A."/>
            <person name="Yano K."/>
            <person name="Ito M."/>
            <person name="Sota M."/>
            <person name="Yuji N."/>
            <person name="Hattori M."/>
            <person name="Tsuda M."/>
        </authorList>
    </citation>
    <scope>NUCLEOTIDE SEQUENCE [LARGE SCALE GENOMIC DNA]</scope>
    <source>
        <strain>ATCC 17616 / 249</strain>
    </source>
</reference>
<organism>
    <name type="scientific">Burkholderia multivorans (strain ATCC 17616 / 249)</name>
    <dbReference type="NCBI Taxonomy" id="395019"/>
    <lineage>
        <taxon>Bacteria</taxon>
        <taxon>Pseudomonadati</taxon>
        <taxon>Pseudomonadota</taxon>
        <taxon>Betaproteobacteria</taxon>
        <taxon>Burkholderiales</taxon>
        <taxon>Burkholderiaceae</taxon>
        <taxon>Burkholderia</taxon>
        <taxon>Burkholderia cepacia complex</taxon>
    </lineage>
</organism>
<protein>
    <recommendedName>
        <fullName evidence="1">D-amino acid dehydrogenase</fullName>
        <ecNumber evidence="1">1.4.99.-</ecNumber>
    </recommendedName>
</protein>
<accession>A9ADT7</accession>
<gene>
    <name evidence="1" type="primary">dadA</name>
    <name type="ordered locus">Bmul_2240</name>
    <name type="ordered locus">BMULJ_00999</name>
</gene>
<comment type="function">
    <text evidence="1">Oxidative deamination of D-amino acids.</text>
</comment>
<comment type="catalytic activity">
    <reaction evidence="1">
        <text>a D-alpha-amino acid + A + H2O = a 2-oxocarboxylate + AH2 + NH4(+)</text>
        <dbReference type="Rhea" id="RHEA:18125"/>
        <dbReference type="ChEBI" id="CHEBI:13193"/>
        <dbReference type="ChEBI" id="CHEBI:15377"/>
        <dbReference type="ChEBI" id="CHEBI:17499"/>
        <dbReference type="ChEBI" id="CHEBI:28938"/>
        <dbReference type="ChEBI" id="CHEBI:35179"/>
        <dbReference type="ChEBI" id="CHEBI:59871"/>
    </reaction>
</comment>
<comment type="cofactor">
    <cofactor evidence="1">
        <name>FAD</name>
        <dbReference type="ChEBI" id="CHEBI:57692"/>
    </cofactor>
</comment>
<comment type="pathway">
    <text>Amino-acid degradation; D-alanine degradation; NH(3) and pyruvate from D-alanine: step 1/1.</text>
</comment>
<comment type="similarity">
    <text evidence="1">Belongs to the DadA oxidoreductase family.</text>
</comment>
<proteinExistence type="inferred from homology"/>
<name>DADA_BURM1</name>
<sequence length="428" mass="46053">MRVVILGSGVVGVASAYYLARAGHEVTVIDREAGPALETSFANAGQISPGYAAPWAAPGVPLKAVKWMFEKHAPLAIRLDGTRFQLQWMWQMLRNCTPERYAVNKSRMVRLAEYSRDCLQALRADTGIQYEGRTGGTLQLFRTQQQLDGAAKDIAVLREANVPFELLSPAELKNAEPALAAVSHKLTGGLRLPGDETGDCQLFTTRLAALAESLGVKFRYNTPIDGLAIAGGKIAGVQCGSETVRADAYVVALGSYSTNFVANLMKIPVYPLKGYSITAPIVDEAAAPVSTVLDETYKIAITRFDQRIRVGGMAEIVGFDKTLRAARRETLEMCVNDLFPGGGDTSKATFWTGLRPMTPDGTPIVGRTPVSNLFLNTGHGTLGWTMSCGSGQLLADLISGKKPAIQADDLSVHRYLKEVAGQTRPAYA</sequence>
<feature type="chain" id="PRO_1000138644" description="D-amino acid dehydrogenase">
    <location>
        <begin position="1"/>
        <end position="428"/>
    </location>
</feature>
<feature type="binding site" evidence="1">
    <location>
        <begin position="3"/>
        <end position="17"/>
    </location>
    <ligand>
        <name>FAD</name>
        <dbReference type="ChEBI" id="CHEBI:57692"/>
    </ligand>
</feature>
<dbReference type="EC" id="1.4.99.-" evidence="1"/>
<dbReference type="EMBL" id="CP000868">
    <property type="protein sequence ID" value="ABX15925.1"/>
    <property type="molecule type" value="Genomic_DNA"/>
</dbReference>
<dbReference type="EMBL" id="AP009385">
    <property type="protein sequence ID" value="BAG42945.1"/>
    <property type="molecule type" value="Genomic_DNA"/>
</dbReference>
<dbReference type="RefSeq" id="WP_012213831.1">
    <property type="nucleotide sequence ID" value="NC_010084.1"/>
</dbReference>
<dbReference type="SMR" id="A9ADT7"/>
<dbReference type="STRING" id="395019.BMULJ_00999"/>
<dbReference type="GeneID" id="89569360"/>
<dbReference type="KEGG" id="bmj:BMULJ_00999"/>
<dbReference type="KEGG" id="bmu:Bmul_2240"/>
<dbReference type="eggNOG" id="COG0665">
    <property type="taxonomic scope" value="Bacteria"/>
</dbReference>
<dbReference type="HOGENOM" id="CLU_007884_9_2_4"/>
<dbReference type="UniPathway" id="UPA00043">
    <property type="reaction ID" value="UER00498"/>
</dbReference>
<dbReference type="Proteomes" id="UP000008815">
    <property type="component" value="Chromosome 1"/>
</dbReference>
<dbReference type="GO" id="GO:0005737">
    <property type="term" value="C:cytoplasm"/>
    <property type="evidence" value="ECO:0007669"/>
    <property type="project" value="TreeGrafter"/>
</dbReference>
<dbReference type="GO" id="GO:0005886">
    <property type="term" value="C:plasma membrane"/>
    <property type="evidence" value="ECO:0007669"/>
    <property type="project" value="TreeGrafter"/>
</dbReference>
<dbReference type="GO" id="GO:0008718">
    <property type="term" value="F:D-amino-acid dehydrogenase activity"/>
    <property type="evidence" value="ECO:0007669"/>
    <property type="project" value="UniProtKB-UniRule"/>
</dbReference>
<dbReference type="GO" id="GO:0055130">
    <property type="term" value="P:D-alanine catabolic process"/>
    <property type="evidence" value="ECO:0007669"/>
    <property type="project" value="UniProtKB-UniPathway"/>
</dbReference>
<dbReference type="FunFam" id="3.50.50.60:FF:000020">
    <property type="entry name" value="D-amino acid dehydrogenase"/>
    <property type="match status" value="1"/>
</dbReference>
<dbReference type="Gene3D" id="3.30.9.10">
    <property type="entry name" value="D-Amino Acid Oxidase, subunit A, domain 2"/>
    <property type="match status" value="1"/>
</dbReference>
<dbReference type="Gene3D" id="3.50.50.60">
    <property type="entry name" value="FAD/NAD(P)-binding domain"/>
    <property type="match status" value="2"/>
</dbReference>
<dbReference type="HAMAP" id="MF_01202">
    <property type="entry name" value="DadA"/>
    <property type="match status" value="1"/>
</dbReference>
<dbReference type="InterPro" id="IPR023080">
    <property type="entry name" value="DadA"/>
</dbReference>
<dbReference type="InterPro" id="IPR006076">
    <property type="entry name" value="FAD-dep_OxRdtase"/>
</dbReference>
<dbReference type="InterPro" id="IPR036188">
    <property type="entry name" value="FAD/NAD-bd_sf"/>
</dbReference>
<dbReference type="NCBIfam" id="NF001933">
    <property type="entry name" value="PRK00711.1"/>
    <property type="match status" value="1"/>
</dbReference>
<dbReference type="PANTHER" id="PTHR13847:SF280">
    <property type="entry name" value="D-AMINO ACID DEHYDROGENASE"/>
    <property type="match status" value="1"/>
</dbReference>
<dbReference type="PANTHER" id="PTHR13847">
    <property type="entry name" value="SARCOSINE DEHYDROGENASE-RELATED"/>
    <property type="match status" value="1"/>
</dbReference>
<dbReference type="Pfam" id="PF01266">
    <property type="entry name" value="DAO"/>
    <property type="match status" value="1"/>
</dbReference>
<dbReference type="SUPFAM" id="SSF54373">
    <property type="entry name" value="FAD-linked reductases, C-terminal domain"/>
    <property type="match status" value="1"/>
</dbReference>
<dbReference type="SUPFAM" id="SSF51905">
    <property type="entry name" value="FAD/NAD(P)-binding domain"/>
    <property type="match status" value="1"/>
</dbReference>
<keyword id="KW-0274">FAD</keyword>
<keyword id="KW-0285">Flavoprotein</keyword>
<keyword id="KW-0560">Oxidoreductase</keyword>
<keyword id="KW-1185">Reference proteome</keyword>